<sequence length="117" mass="13007">MDKKTARLSRSKRTRIKLRELGHTRLCVYRTPRHVYAQVISGDGSTVLVAASTVEKDVKAKCKYTGNVESAAIVGEIIANRCKEKGISQVAFDRSGYKYHGRVKALAEAAREHGLQF</sequence>
<comment type="function">
    <text evidence="1">This is one of the proteins that bind and probably mediate the attachment of the 5S RNA into the large ribosomal subunit, where it forms part of the central protuberance.</text>
</comment>
<comment type="subunit">
    <text evidence="1">Part of the 50S ribosomal subunit; part of the 5S rRNA/L5/L18/L25 subcomplex. Contacts the 5S and 23S rRNAs.</text>
</comment>
<comment type="similarity">
    <text evidence="1">Belongs to the universal ribosomal protein uL18 family.</text>
</comment>
<accession>A0Q4J9</accession>
<dbReference type="EMBL" id="CP000439">
    <property type="protein sequence ID" value="ABK89164.1"/>
    <property type="molecule type" value="Genomic_DNA"/>
</dbReference>
<dbReference type="RefSeq" id="WP_003032890.1">
    <property type="nucleotide sequence ID" value="NZ_CP009633.1"/>
</dbReference>
<dbReference type="SMR" id="A0Q4J9"/>
<dbReference type="GeneID" id="75264245"/>
<dbReference type="KEGG" id="ftn:FTN_0255"/>
<dbReference type="KEGG" id="ftx:AW25_1787"/>
<dbReference type="BioCyc" id="FTUL401614:G1G75-266-MONOMER"/>
<dbReference type="Proteomes" id="UP000000762">
    <property type="component" value="Chromosome"/>
</dbReference>
<dbReference type="GO" id="GO:0022625">
    <property type="term" value="C:cytosolic large ribosomal subunit"/>
    <property type="evidence" value="ECO:0007669"/>
    <property type="project" value="TreeGrafter"/>
</dbReference>
<dbReference type="GO" id="GO:0008097">
    <property type="term" value="F:5S rRNA binding"/>
    <property type="evidence" value="ECO:0007669"/>
    <property type="project" value="TreeGrafter"/>
</dbReference>
<dbReference type="GO" id="GO:0003735">
    <property type="term" value="F:structural constituent of ribosome"/>
    <property type="evidence" value="ECO:0007669"/>
    <property type="project" value="InterPro"/>
</dbReference>
<dbReference type="GO" id="GO:0006412">
    <property type="term" value="P:translation"/>
    <property type="evidence" value="ECO:0007669"/>
    <property type="project" value="UniProtKB-UniRule"/>
</dbReference>
<dbReference type="CDD" id="cd00432">
    <property type="entry name" value="Ribosomal_L18_L5e"/>
    <property type="match status" value="1"/>
</dbReference>
<dbReference type="FunFam" id="3.30.420.100:FF:000001">
    <property type="entry name" value="50S ribosomal protein L18"/>
    <property type="match status" value="1"/>
</dbReference>
<dbReference type="Gene3D" id="3.30.420.100">
    <property type="match status" value="1"/>
</dbReference>
<dbReference type="HAMAP" id="MF_01337_B">
    <property type="entry name" value="Ribosomal_uL18_B"/>
    <property type="match status" value="1"/>
</dbReference>
<dbReference type="InterPro" id="IPR004389">
    <property type="entry name" value="Ribosomal_uL18_bac-type"/>
</dbReference>
<dbReference type="InterPro" id="IPR005484">
    <property type="entry name" value="Ribosomal_uL18_bac/euk"/>
</dbReference>
<dbReference type="NCBIfam" id="TIGR00060">
    <property type="entry name" value="L18_bact"/>
    <property type="match status" value="1"/>
</dbReference>
<dbReference type="PANTHER" id="PTHR12899">
    <property type="entry name" value="39S RIBOSOMAL PROTEIN L18, MITOCHONDRIAL"/>
    <property type="match status" value="1"/>
</dbReference>
<dbReference type="PANTHER" id="PTHR12899:SF3">
    <property type="entry name" value="LARGE RIBOSOMAL SUBUNIT PROTEIN UL18M"/>
    <property type="match status" value="1"/>
</dbReference>
<dbReference type="Pfam" id="PF00861">
    <property type="entry name" value="Ribosomal_L18p"/>
    <property type="match status" value="1"/>
</dbReference>
<dbReference type="SUPFAM" id="SSF53137">
    <property type="entry name" value="Translational machinery components"/>
    <property type="match status" value="1"/>
</dbReference>
<evidence type="ECO:0000255" key="1">
    <source>
        <dbReference type="HAMAP-Rule" id="MF_01337"/>
    </source>
</evidence>
<evidence type="ECO:0000305" key="2"/>
<gene>
    <name evidence="1" type="primary">rplR</name>
    <name type="ordered locus">FTN_0255</name>
</gene>
<proteinExistence type="inferred from homology"/>
<reference key="1">
    <citation type="journal article" date="2007" name="Genome Biol.">
        <title>Comparison of Francisella tularensis genomes reveals evolutionary events associated with the emergence of human pathogenic strains.</title>
        <authorList>
            <person name="Rohmer L."/>
            <person name="Fong C."/>
            <person name="Abmayr S."/>
            <person name="Wasnick M."/>
            <person name="Larson Freeman T.J."/>
            <person name="Radey M."/>
            <person name="Guina T."/>
            <person name="Svensson K."/>
            <person name="Hayden H.S."/>
            <person name="Jacobs M."/>
            <person name="Gallagher L.A."/>
            <person name="Manoil C."/>
            <person name="Ernst R.K."/>
            <person name="Drees B."/>
            <person name="Buckley D."/>
            <person name="Haugen E."/>
            <person name="Bovee D."/>
            <person name="Zhou Y."/>
            <person name="Chang J."/>
            <person name="Levy R."/>
            <person name="Lim R."/>
            <person name="Gillett W."/>
            <person name="Guenthener D."/>
            <person name="Kang A."/>
            <person name="Shaffer S.A."/>
            <person name="Taylor G."/>
            <person name="Chen J."/>
            <person name="Gallis B."/>
            <person name="D'Argenio D.A."/>
            <person name="Forsman M."/>
            <person name="Olson M.V."/>
            <person name="Goodlett D.R."/>
            <person name="Kaul R."/>
            <person name="Miller S.I."/>
            <person name="Brittnacher M.J."/>
        </authorList>
    </citation>
    <scope>NUCLEOTIDE SEQUENCE [LARGE SCALE GENOMIC DNA]</scope>
    <source>
        <strain>U112</strain>
    </source>
</reference>
<protein>
    <recommendedName>
        <fullName evidence="1">Large ribosomal subunit protein uL18</fullName>
    </recommendedName>
    <alternativeName>
        <fullName evidence="2">50S ribosomal protein L18</fullName>
    </alternativeName>
</protein>
<name>RL18_FRATN</name>
<keyword id="KW-0687">Ribonucleoprotein</keyword>
<keyword id="KW-0689">Ribosomal protein</keyword>
<keyword id="KW-0694">RNA-binding</keyword>
<keyword id="KW-0699">rRNA-binding</keyword>
<organism>
    <name type="scientific">Francisella tularensis subsp. novicida (strain U112)</name>
    <dbReference type="NCBI Taxonomy" id="401614"/>
    <lineage>
        <taxon>Bacteria</taxon>
        <taxon>Pseudomonadati</taxon>
        <taxon>Pseudomonadota</taxon>
        <taxon>Gammaproteobacteria</taxon>
        <taxon>Thiotrichales</taxon>
        <taxon>Francisellaceae</taxon>
        <taxon>Francisella</taxon>
    </lineage>
</organism>
<feature type="chain" id="PRO_1000053027" description="Large ribosomal subunit protein uL18">
    <location>
        <begin position="1"/>
        <end position="117"/>
    </location>
</feature>